<name>RS16_DESHY</name>
<sequence length="88" mass="10008">MATKIRLRRMGAKKNPFYRLIVADSNAPRDGRFIEEIGFYDPTKQPEVLNIDEEKAMKWLATGAQPSDTAKSLLRKAGVLAKYHESKK</sequence>
<protein>
    <recommendedName>
        <fullName evidence="1">Small ribosomal subunit protein bS16</fullName>
    </recommendedName>
    <alternativeName>
        <fullName evidence="2">30S ribosomal protein S16</fullName>
    </alternativeName>
</protein>
<reference key="1">
    <citation type="journal article" date="2006" name="J. Bacteriol.">
        <title>Complete genome sequence of the dehalorespiring bacterium Desulfitobacterium hafniense Y51 and comparison with Dehalococcoides ethenogenes 195.</title>
        <authorList>
            <person name="Nonaka H."/>
            <person name="Keresztes G."/>
            <person name="Shinoda Y."/>
            <person name="Ikenaga Y."/>
            <person name="Abe M."/>
            <person name="Naito K."/>
            <person name="Inatomi K."/>
            <person name="Furukawa K."/>
            <person name="Inui M."/>
            <person name="Yukawa H."/>
        </authorList>
    </citation>
    <scope>NUCLEOTIDE SEQUENCE [LARGE SCALE GENOMIC DNA]</scope>
    <source>
        <strain>Y51</strain>
    </source>
</reference>
<evidence type="ECO:0000255" key="1">
    <source>
        <dbReference type="HAMAP-Rule" id="MF_00385"/>
    </source>
</evidence>
<evidence type="ECO:0000305" key="2"/>
<comment type="similarity">
    <text evidence="1">Belongs to the bacterial ribosomal protein bS16 family.</text>
</comment>
<organism>
    <name type="scientific">Desulfitobacterium hafniense (strain Y51)</name>
    <dbReference type="NCBI Taxonomy" id="138119"/>
    <lineage>
        <taxon>Bacteria</taxon>
        <taxon>Bacillati</taxon>
        <taxon>Bacillota</taxon>
        <taxon>Clostridia</taxon>
        <taxon>Eubacteriales</taxon>
        <taxon>Desulfitobacteriaceae</taxon>
        <taxon>Desulfitobacterium</taxon>
    </lineage>
</organism>
<accession>Q24UA5</accession>
<feature type="chain" id="PRO_1000049251" description="Small ribosomal subunit protein bS16">
    <location>
        <begin position="1"/>
        <end position="88"/>
    </location>
</feature>
<gene>
    <name evidence="1" type="primary">rpsP</name>
    <name type="ordered locus">DSY2598</name>
</gene>
<dbReference type="EMBL" id="AP008230">
    <property type="protein sequence ID" value="BAE84387.1"/>
    <property type="molecule type" value="Genomic_DNA"/>
</dbReference>
<dbReference type="RefSeq" id="WP_005813195.1">
    <property type="nucleotide sequence ID" value="NC_007907.1"/>
</dbReference>
<dbReference type="SMR" id="Q24UA5"/>
<dbReference type="STRING" id="138119.DSY2598"/>
<dbReference type="KEGG" id="dsy:DSY2598"/>
<dbReference type="eggNOG" id="COG0228">
    <property type="taxonomic scope" value="Bacteria"/>
</dbReference>
<dbReference type="HOGENOM" id="CLU_100590_5_0_9"/>
<dbReference type="Proteomes" id="UP000001946">
    <property type="component" value="Chromosome"/>
</dbReference>
<dbReference type="GO" id="GO:0005737">
    <property type="term" value="C:cytoplasm"/>
    <property type="evidence" value="ECO:0007669"/>
    <property type="project" value="UniProtKB-ARBA"/>
</dbReference>
<dbReference type="GO" id="GO:0015935">
    <property type="term" value="C:small ribosomal subunit"/>
    <property type="evidence" value="ECO:0007669"/>
    <property type="project" value="TreeGrafter"/>
</dbReference>
<dbReference type="GO" id="GO:0003735">
    <property type="term" value="F:structural constituent of ribosome"/>
    <property type="evidence" value="ECO:0007669"/>
    <property type="project" value="InterPro"/>
</dbReference>
<dbReference type="GO" id="GO:0006412">
    <property type="term" value="P:translation"/>
    <property type="evidence" value="ECO:0007669"/>
    <property type="project" value="UniProtKB-UniRule"/>
</dbReference>
<dbReference type="Gene3D" id="3.30.1320.10">
    <property type="match status" value="1"/>
</dbReference>
<dbReference type="HAMAP" id="MF_00385">
    <property type="entry name" value="Ribosomal_bS16"/>
    <property type="match status" value="1"/>
</dbReference>
<dbReference type="InterPro" id="IPR000307">
    <property type="entry name" value="Ribosomal_bS16"/>
</dbReference>
<dbReference type="InterPro" id="IPR023803">
    <property type="entry name" value="Ribosomal_bS16_dom_sf"/>
</dbReference>
<dbReference type="NCBIfam" id="TIGR00002">
    <property type="entry name" value="S16"/>
    <property type="match status" value="1"/>
</dbReference>
<dbReference type="PANTHER" id="PTHR12919">
    <property type="entry name" value="30S RIBOSOMAL PROTEIN S16"/>
    <property type="match status" value="1"/>
</dbReference>
<dbReference type="PANTHER" id="PTHR12919:SF20">
    <property type="entry name" value="SMALL RIBOSOMAL SUBUNIT PROTEIN BS16M"/>
    <property type="match status" value="1"/>
</dbReference>
<dbReference type="Pfam" id="PF00886">
    <property type="entry name" value="Ribosomal_S16"/>
    <property type="match status" value="1"/>
</dbReference>
<dbReference type="SUPFAM" id="SSF54565">
    <property type="entry name" value="Ribosomal protein S16"/>
    <property type="match status" value="1"/>
</dbReference>
<proteinExistence type="inferred from homology"/>
<keyword id="KW-1185">Reference proteome</keyword>
<keyword id="KW-0687">Ribonucleoprotein</keyword>
<keyword id="KW-0689">Ribosomal protein</keyword>